<sequence>MARYFRRRKFCRFTAEGVVEIDYKDIATLKNYITESGKIVPSRITGTRAKYQRQLARCIKRARYLSLLPYTDRHQ</sequence>
<name>RS18_YERPE</name>
<organism>
    <name type="scientific">Yersinia pestis</name>
    <dbReference type="NCBI Taxonomy" id="632"/>
    <lineage>
        <taxon>Bacteria</taxon>
        <taxon>Pseudomonadati</taxon>
        <taxon>Pseudomonadota</taxon>
        <taxon>Gammaproteobacteria</taxon>
        <taxon>Enterobacterales</taxon>
        <taxon>Yersiniaceae</taxon>
        <taxon>Yersinia</taxon>
    </lineage>
</organism>
<feature type="chain" id="PRO_0000111269" description="Small ribosomal subunit protein bS18">
    <location>
        <begin position="1"/>
        <end position="75"/>
    </location>
</feature>
<reference key="1">
    <citation type="journal article" date="2001" name="Nature">
        <title>Genome sequence of Yersinia pestis, the causative agent of plague.</title>
        <authorList>
            <person name="Parkhill J."/>
            <person name="Wren B.W."/>
            <person name="Thomson N.R."/>
            <person name="Titball R.W."/>
            <person name="Holden M.T.G."/>
            <person name="Prentice M.B."/>
            <person name="Sebaihia M."/>
            <person name="James K.D."/>
            <person name="Churcher C.M."/>
            <person name="Mungall K.L."/>
            <person name="Baker S."/>
            <person name="Basham D."/>
            <person name="Bentley S.D."/>
            <person name="Brooks K."/>
            <person name="Cerdeno-Tarraga A.-M."/>
            <person name="Chillingworth T."/>
            <person name="Cronin A."/>
            <person name="Davies R.M."/>
            <person name="Davis P."/>
            <person name="Dougan G."/>
            <person name="Feltwell T."/>
            <person name="Hamlin N."/>
            <person name="Holroyd S."/>
            <person name="Jagels K."/>
            <person name="Karlyshev A.V."/>
            <person name="Leather S."/>
            <person name="Moule S."/>
            <person name="Oyston P.C.F."/>
            <person name="Quail M.A."/>
            <person name="Rutherford K.M."/>
            <person name="Simmonds M."/>
            <person name="Skelton J."/>
            <person name="Stevens K."/>
            <person name="Whitehead S."/>
            <person name="Barrell B.G."/>
        </authorList>
    </citation>
    <scope>NUCLEOTIDE SEQUENCE [LARGE SCALE GENOMIC DNA]</scope>
    <source>
        <strain>CO-92 / Biovar Orientalis</strain>
    </source>
</reference>
<reference key="2">
    <citation type="journal article" date="2002" name="J. Bacteriol.">
        <title>Genome sequence of Yersinia pestis KIM.</title>
        <authorList>
            <person name="Deng W."/>
            <person name="Burland V."/>
            <person name="Plunkett G. III"/>
            <person name="Boutin A."/>
            <person name="Mayhew G.F."/>
            <person name="Liss P."/>
            <person name="Perna N.T."/>
            <person name="Rose D.J."/>
            <person name="Mau B."/>
            <person name="Zhou S."/>
            <person name="Schwartz D.C."/>
            <person name="Fetherston J.D."/>
            <person name="Lindler L.E."/>
            <person name="Brubaker R.R."/>
            <person name="Plano G.V."/>
            <person name="Straley S.C."/>
            <person name="McDonough K.A."/>
            <person name="Nilles M.L."/>
            <person name="Matson J.S."/>
            <person name="Blattner F.R."/>
            <person name="Perry R.D."/>
        </authorList>
    </citation>
    <scope>NUCLEOTIDE SEQUENCE [LARGE SCALE GENOMIC DNA]</scope>
    <source>
        <strain>KIM10+ / Biovar Mediaevalis</strain>
    </source>
</reference>
<reference key="3">
    <citation type="journal article" date="2004" name="DNA Res.">
        <title>Complete genome sequence of Yersinia pestis strain 91001, an isolate avirulent to humans.</title>
        <authorList>
            <person name="Song Y."/>
            <person name="Tong Z."/>
            <person name="Wang J."/>
            <person name="Wang L."/>
            <person name="Guo Z."/>
            <person name="Han Y."/>
            <person name="Zhang J."/>
            <person name="Pei D."/>
            <person name="Zhou D."/>
            <person name="Qin H."/>
            <person name="Pang X."/>
            <person name="Han Y."/>
            <person name="Zhai J."/>
            <person name="Li M."/>
            <person name="Cui B."/>
            <person name="Qi Z."/>
            <person name="Jin L."/>
            <person name="Dai R."/>
            <person name="Chen F."/>
            <person name="Li S."/>
            <person name="Ye C."/>
            <person name="Du Z."/>
            <person name="Lin W."/>
            <person name="Wang J."/>
            <person name="Yu J."/>
            <person name="Yang H."/>
            <person name="Wang J."/>
            <person name="Huang P."/>
            <person name="Yang R."/>
        </authorList>
    </citation>
    <scope>NUCLEOTIDE SEQUENCE [LARGE SCALE GENOMIC DNA]</scope>
    <source>
        <strain>91001 / Biovar Mediaevalis</strain>
    </source>
</reference>
<dbReference type="EMBL" id="AL590842">
    <property type="protein sequence ID" value="CAL22125.1"/>
    <property type="molecule type" value="Genomic_DNA"/>
</dbReference>
<dbReference type="EMBL" id="AE009952">
    <property type="protein sequence ID" value="AAM84234.1"/>
    <property type="molecule type" value="Genomic_DNA"/>
</dbReference>
<dbReference type="EMBL" id="AE017042">
    <property type="protein sequence ID" value="AAS60814.1"/>
    <property type="molecule type" value="Genomic_DNA"/>
</dbReference>
<dbReference type="PIR" id="AB0430">
    <property type="entry name" value="AB0430"/>
</dbReference>
<dbReference type="RefSeq" id="WP_002210155.1">
    <property type="nucleotide sequence ID" value="NZ_WUCM01000155.1"/>
</dbReference>
<dbReference type="RefSeq" id="YP_002348426.1">
    <property type="nucleotide sequence ID" value="NC_003143.1"/>
</dbReference>
<dbReference type="SMR" id="Q8ZB83"/>
<dbReference type="STRING" id="214092.YPO3537"/>
<dbReference type="PaxDb" id="214092-YPO3537"/>
<dbReference type="DNASU" id="1145593"/>
<dbReference type="EnsemblBacteria" id="AAS60814">
    <property type="protein sequence ID" value="AAS60814"/>
    <property type="gene ID" value="YP_0544"/>
</dbReference>
<dbReference type="GeneID" id="98391335"/>
<dbReference type="KEGG" id="ype:YPO3537"/>
<dbReference type="KEGG" id="ypk:y0646"/>
<dbReference type="KEGG" id="ypm:YP_0544"/>
<dbReference type="PATRIC" id="fig|214092.21.peg.4032"/>
<dbReference type="eggNOG" id="COG0238">
    <property type="taxonomic scope" value="Bacteria"/>
</dbReference>
<dbReference type="HOGENOM" id="CLU_148710_2_2_6"/>
<dbReference type="OMA" id="QKKYCRF"/>
<dbReference type="OrthoDB" id="9812008at2"/>
<dbReference type="Proteomes" id="UP000000815">
    <property type="component" value="Chromosome"/>
</dbReference>
<dbReference type="Proteomes" id="UP000001019">
    <property type="component" value="Chromosome"/>
</dbReference>
<dbReference type="Proteomes" id="UP000002490">
    <property type="component" value="Chromosome"/>
</dbReference>
<dbReference type="GO" id="GO:0022627">
    <property type="term" value="C:cytosolic small ribosomal subunit"/>
    <property type="evidence" value="ECO:0000318"/>
    <property type="project" value="GO_Central"/>
</dbReference>
<dbReference type="GO" id="GO:0070181">
    <property type="term" value="F:small ribosomal subunit rRNA binding"/>
    <property type="evidence" value="ECO:0000318"/>
    <property type="project" value="GO_Central"/>
</dbReference>
<dbReference type="GO" id="GO:0003735">
    <property type="term" value="F:structural constituent of ribosome"/>
    <property type="evidence" value="ECO:0000318"/>
    <property type="project" value="GO_Central"/>
</dbReference>
<dbReference type="GO" id="GO:0006412">
    <property type="term" value="P:translation"/>
    <property type="evidence" value="ECO:0000318"/>
    <property type="project" value="GO_Central"/>
</dbReference>
<dbReference type="FunFam" id="4.10.640.10:FF:000001">
    <property type="entry name" value="30S ribosomal protein S18"/>
    <property type="match status" value="1"/>
</dbReference>
<dbReference type="Gene3D" id="4.10.640.10">
    <property type="entry name" value="Ribosomal protein S18"/>
    <property type="match status" value="1"/>
</dbReference>
<dbReference type="HAMAP" id="MF_00270">
    <property type="entry name" value="Ribosomal_bS18"/>
    <property type="match status" value="1"/>
</dbReference>
<dbReference type="InterPro" id="IPR001648">
    <property type="entry name" value="Ribosomal_bS18"/>
</dbReference>
<dbReference type="InterPro" id="IPR018275">
    <property type="entry name" value="Ribosomal_bS18_CS"/>
</dbReference>
<dbReference type="InterPro" id="IPR036870">
    <property type="entry name" value="Ribosomal_bS18_sf"/>
</dbReference>
<dbReference type="NCBIfam" id="TIGR00165">
    <property type="entry name" value="S18"/>
    <property type="match status" value="1"/>
</dbReference>
<dbReference type="PANTHER" id="PTHR13479">
    <property type="entry name" value="30S RIBOSOMAL PROTEIN S18"/>
    <property type="match status" value="1"/>
</dbReference>
<dbReference type="PANTHER" id="PTHR13479:SF40">
    <property type="entry name" value="SMALL RIBOSOMAL SUBUNIT PROTEIN BS18M"/>
    <property type="match status" value="1"/>
</dbReference>
<dbReference type="Pfam" id="PF01084">
    <property type="entry name" value="Ribosomal_S18"/>
    <property type="match status" value="1"/>
</dbReference>
<dbReference type="PRINTS" id="PR00974">
    <property type="entry name" value="RIBOSOMALS18"/>
</dbReference>
<dbReference type="SUPFAM" id="SSF46911">
    <property type="entry name" value="Ribosomal protein S18"/>
    <property type="match status" value="1"/>
</dbReference>
<dbReference type="PROSITE" id="PS00057">
    <property type="entry name" value="RIBOSOMAL_S18"/>
    <property type="match status" value="1"/>
</dbReference>
<comment type="function">
    <text evidence="1">Binds as a heterodimer with protein bS6 to the central domain of the 16S rRNA, where it helps stabilize the platform of the 30S subunit.</text>
</comment>
<comment type="subunit">
    <text evidence="1">Part of the 30S ribosomal subunit. Forms a tight heterodimer with protein bS6.</text>
</comment>
<comment type="similarity">
    <text evidence="1">Belongs to the bacterial ribosomal protein bS18 family.</text>
</comment>
<protein>
    <recommendedName>
        <fullName evidence="1">Small ribosomal subunit protein bS18</fullName>
    </recommendedName>
    <alternativeName>
        <fullName evidence="2">30S ribosomal protein S18</fullName>
    </alternativeName>
</protein>
<evidence type="ECO:0000255" key="1">
    <source>
        <dbReference type="HAMAP-Rule" id="MF_00270"/>
    </source>
</evidence>
<evidence type="ECO:0000305" key="2"/>
<accession>Q8ZB83</accession>
<accession>Q0WBB2</accession>
<proteinExistence type="inferred from homology"/>
<keyword id="KW-1185">Reference proteome</keyword>
<keyword id="KW-0687">Ribonucleoprotein</keyword>
<keyword id="KW-0689">Ribosomal protein</keyword>
<keyword id="KW-0694">RNA-binding</keyword>
<keyword id="KW-0699">rRNA-binding</keyword>
<gene>
    <name evidence="1" type="primary">rpsR</name>
    <name type="ordered locus">YPO3537</name>
    <name type="ordered locus">y0646</name>
    <name type="ordered locus">YP_0544</name>
</gene>